<sequence length="519" mass="55836">MDAGLIILDGWGLNPDDDVRDAVAAADTPNFDRYRDAGAASTLTTHGRRVGLPEGQMGNSEVGHLNIGAGRVVKQDSARVSDSIARSRGEAPPDDDAQDPPFFENETILSAFEHAEAHGGRVHFMGLVSDGGVHSYQDHLHALIELAGERGTDAVSHAFTDGRDTSPTGGEDYLADLEAHVEEHGTGHVATVCGRYYAMDRDQNWERTRRAYDAIVHREGDHHADEAVTAATESYARDTTDEFIEPTTVGDHAGLEAGDAVVFFNFRSDRARQLTRMLGDIRPEDWGSDTEPPDTRLVTMTQYDETFDLPVAFPPNQPADVLGEVLSEAGKTQIRLAETEKYPHVTYFLNGGREVAFDGESREIVDSPDVATYDLQPEMSAPELADTAIEFIETEDPSAMVLNFANPDMVGHTGDFDAAVTAVEAVDEQLGRLVETIGAAGGHALICADHGNADDMGTEDDPHTAHTTNPVPFIYLSPDGTAGGRTARDGGTLADLAPTMLTLMGIDRPDAMTGTPLVE</sequence>
<comment type="function">
    <text evidence="1">Catalyzes the interconversion of 2-phosphoglycerate and 3-phosphoglycerate.</text>
</comment>
<comment type="catalytic activity">
    <reaction evidence="1">
        <text>(2R)-2-phosphoglycerate = (2R)-3-phosphoglycerate</text>
        <dbReference type="Rhea" id="RHEA:15901"/>
        <dbReference type="ChEBI" id="CHEBI:58272"/>
        <dbReference type="ChEBI" id="CHEBI:58289"/>
        <dbReference type="EC" id="5.4.2.12"/>
    </reaction>
</comment>
<comment type="cofactor">
    <cofactor evidence="1">
        <name>Mn(2+)</name>
        <dbReference type="ChEBI" id="CHEBI:29035"/>
    </cofactor>
    <text evidence="1">Binds 2 manganese ions per subunit.</text>
</comment>
<comment type="pathway">
    <text evidence="1">Carbohydrate degradation; glycolysis; pyruvate from D-glyceraldehyde 3-phosphate: step 3/5.</text>
</comment>
<comment type="similarity">
    <text evidence="1">Belongs to the BPG-independent phosphoglycerate mutase family.</text>
</comment>
<feature type="chain" id="PRO_0000212236" description="2,3-bisphosphoglycerate-independent phosphoglycerate mutase">
    <location>
        <begin position="1"/>
        <end position="519"/>
    </location>
</feature>
<feature type="region of interest" description="Disordered" evidence="2">
    <location>
        <begin position="76"/>
        <end position="102"/>
    </location>
</feature>
<feature type="compositionally biased region" description="Basic and acidic residues" evidence="2">
    <location>
        <begin position="76"/>
        <end position="91"/>
    </location>
</feature>
<feature type="active site" description="Phosphoserine intermediate" evidence="1">
    <location>
        <position position="60"/>
    </location>
</feature>
<feature type="binding site" evidence="1">
    <location>
        <position position="9"/>
    </location>
    <ligand>
        <name>Mn(2+)</name>
        <dbReference type="ChEBI" id="CHEBI:29035"/>
        <label>2</label>
    </ligand>
</feature>
<feature type="binding site" evidence="1">
    <location>
        <position position="60"/>
    </location>
    <ligand>
        <name>Mn(2+)</name>
        <dbReference type="ChEBI" id="CHEBI:29035"/>
        <label>2</label>
    </ligand>
</feature>
<feature type="binding site" evidence="1">
    <location>
        <position position="134"/>
    </location>
    <ligand>
        <name>substrate</name>
    </ligand>
</feature>
<feature type="binding site" evidence="1">
    <location>
        <begin position="163"/>
        <end position="164"/>
    </location>
    <ligand>
        <name>substrate</name>
    </ligand>
</feature>
<feature type="binding site" evidence="1">
    <location>
        <position position="195"/>
    </location>
    <ligand>
        <name>substrate</name>
    </ligand>
</feature>
<feature type="binding site" evidence="1">
    <location>
        <position position="201"/>
    </location>
    <ligand>
        <name>substrate</name>
    </ligand>
</feature>
<feature type="binding site" evidence="1">
    <location>
        <begin position="267"/>
        <end position="270"/>
    </location>
    <ligand>
        <name>substrate</name>
    </ligand>
</feature>
<feature type="binding site" evidence="1">
    <location>
        <position position="341"/>
    </location>
    <ligand>
        <name>substrate</name>
    </ligand>
</feature>
<feature type="binding site" evidence="1">
    <location>
        <position position="408"/>
    </location>
    <ligand>
        <name>Mn(2+)</name>
        <dbReference type="ChEBI" id="CHEBI:29035"/>
        <label>1</label>
    </ligand>
</feature>
<feature type="binding site" evidence="1">
    <location>
        <position position="412"/>
    </location>
    <ligand>
        <name>Mn(2+)</name>
        <dbReference type="ChEBI" id="CHEBI:29035"/>
        <label>1</label>
    </ligand>
</feature>
<feature type="binding site" evidence="1">
    <location>
        <position position="449"/>
    </location>
    <ligand>
        <name>Mn(2+)</name>
        <dbReference type="ChEBI" id="CHEBI:29035"/>
        <label>2</label>
    </ligand>
</feature>
<feature type="binding site" evidence="1">
    <location>
        <position position="450"/>
    </location>
    <ligand>
        <name>Mn(2+)</name>
        <dbReference type="ChEBI" id="CHEBI:29035"/>
        <label>2</label>
    </ligand>
</feature>
<feature type="binding site" evidence="1">
    <location>
        <position position="466"/>
    </location>
    <ligand>
        <name>Mn(2+)</name>
        <dbReference type="ChEBI" id="CHEBI:29035"/>
        <label>1</label>
    </ligand>
</feature>
<name>GPMI_HALMA</name>
<accession>Q5UXB9</accession>
<dbReference type="EC" id="5.4.2.12" evidence="1"/>
<dbReference type="EMBL" id="AY596297">
    <property type="protein sequence ID" value="AAV48084.1"/>
    <property type="molecule type" value="Genomic_DNA"/>
</dbReference>
<dbReference type="RefSeq" id="WP_011224784.1">
    <property type="nucleotide sequence ID" value="NC_006396.1"/>
</dbReference>
<dbReference type="SMR" id="Q5UXB9"/>
<dbReference type="STRING" id="272569.rrnAC3403"/>
<dbReference type="PaxDb" id="272569-rrnAC3403"/>
<dbReference type="EnsemblBacteria" id="AAV48084">
    <property type="protein sequence ID" value="AAV48084"/>
    <property type="gene ID" value="rrnAC3403"/>
</dbReference>
<dbReference type="GeneID" id="40154189"/>
<dbReference type="KEGG" id="hma:rrnAC3403"/>
<dbReference type="PATRIC" id="fig|272569.17.peg.3921"/>
<dbReference type="eggNOG" id="arCOG03068">
    <property type="taxonomic scope" value="Archaea"/>
</dbReference>
<dbReference type="HOGENOM" id="CLU_026099_2_0_2"/>
<dbReference type="UniPathway" id="UPA00109">
    <property type="reaction ID" value="UER00186"/>
</dbReference>
<dbReference type="Proteomes" id="UP000001169">
    <property type="component" value="Chromosome I"/>
</dbReference>
<dbReference type="GO" id="GO:0005737">
    <property type="term" value="C:cytoplasm"/>
    <property type="evidence" value="ECO:0007669"/>
    <property type="project" value="InterPro"/>
</dbReference>
<dbReference type="GO" id="GO:0030145">
    <property type="term" value="F:manganese ion binding"/>
    <property type="evidence" value="ECO:0007669"/>
    <property type="project" value="UniProtKB-UniRule"/>
</dbReference>
<dbReference type="GO" id="GO:0004619">
    <property type="term" value="F:phosphoglycerate mutase activity"/>
    <property type="evidence" value="ECO:0007669"/>
    <property type="project" value="UniProtKB-EC"/>
</dbReference>
<dbReference type="GO" id="GO:0006007">
    <property type="term" value="P:glucose catabolic process"/>
    <property type="evidence" value="ECO:0007669"/>
    <property type="project" value="InterPro"/>
</dbReference>
<dbReference type="GO" id="GO:0006096">
    <property type="term" value="P:glycolytic process"/>
    <property type="evidence" value="ECO:0007669"/>
    <property type="project" value="UniProtKB-UniRule"/>
</dbReference>
<dbReference type="CDD" id="cd16010">
    <property type="entry name" value="iPGM"/>
    <property type="match status" value="1"/>
</dbReference>
<dbReference type="FunFam" id="3.40.1450.10:FF:000002">
    <property type="entry name" value="2,3-bisphosphoglycerate-independent phosphoglycerate mutase"/>
    <property type="match status" value="1"/>
</dbReference>
<dbReference type="Gene3D" id="3.40.720.10">
    <property type="entry name" value="Alkaline Phosphatase, subunit A"/>
    <property type="match status" value="1"/>
</dbReference>
<dbReference type="Gene3D" id="3.40.1450.10">
    <property type="entry name" value="BPG-independent phosphoglycerate mutase, domain B"/>
    <property type="match status" value="1"/>
</dbReference>
<dbReference type="HAMAP" id="MF_01038">
    <property type="entry name" value="GpmI"/>
    <property type="match status" value="1"/>
</dbReference>
<dbReference type="InterPro" id="IPR017850">
    <property type="entry name" value="Alkaline_phosphatase_core_sf"/>
</dbReference>
<dbReference type="InterPro" id="IPR011258">
    <property type="entry name" value="BPG-indep_PGM_N"/>
</dbReference>
<dbReference type="InterPro" id="IPR006124">
    <property type="entry name" value="Metalloenzyme"/>
</dbReference>
<dbReference type="InterPro" id="IPR036646">
    <property type="entry name" value="PGAM_B_sf"/>
</dbReference>
<dbReference type="InterPro" id="IPR005995">
    <property type="entry name" value="Pgm_bpd_ind"/>
</dbReference>
<dbReference type="NCBIfam" id="TIGR01307">
    <property type="entry name" value="pgm_bpd_ind"/>
    <property type="match status" value="1"/>
</dbReference>
<dbReference type="PANTHER" id="PTHR31637">
    <property type="entry name" value="2,3-BISPHOSPHOGLYCERATE-INDEPENDENT PHOSPHOGLYCERATE MUTASE"/>
    <property type="match status" value="1"/>
</dbReference>
<dbReference type="PANTHER" id="PTHR31637:SF0">
    <property type="entry name" value="2,3-BISPHOSPHOGLYCERATE-INDEPENDENT PHOSPHOGLYCERATE MUTASE"/>
    <property type="match status" value="1"/>
</dbReference>
<dbReference type="Pfam" id="PF06415">
    <property type="entry name" value="iPGM_N"/>
    <property type="match status" value="1"/>
</dbReference>
<dbReference type="Pfam" id="PF01676">
    <property type="entry name" value="Metalloenzyme"/>
    <property type="match status" value="1"/>
</dbReference>
<dbReference type="PIRSF" id="PIRSF001492">
    <property type="entry name" value="IPGAM"/>
    <property type="match status" value="1"/>
</dbReference>
<dbReference type="SUPFAM" id="SSF64158">
    <property type="entry name" value="2,3-Bisphosphoglycerate-independent phosphoglycerate mutase, substrate-binding domain"/>
    <property type="match status" value="1"/>
</dbReference>
<dbReference type="SUPFAM" id="SSF53649">
    <property type="entry name" value="Alkaline phosphatase-like"/>
    <property type="match status" value="1"/>
</dbReference>
<organism>
    <name type="scientific">Haloarcula marismortui (strain ATCC 43049 / DSM 3752 / JCM 8966 / VKM B-1809)</name>
    <name type="common">Halobacterium marismortui</name>
    <dbReference type="NCBI Taxonomy" id="272569"/>
    <lineage>
        <taxon>Archaea</taxon>
        <taxon>Methanobacteriati</taxon>
        <taxon>Methanobacteriota</taxon>
        <taxon>Stenosarchaea group</taxon>
        <taxon>Halobacteria</taxon>
        <taxon>Halobacteriales</taxon>
        <taxon>Haloarculaceae</taxon>
        <taxon>Haloarcula</taxon>
    </lineage>
</organism>
<keyword id="KW-0324">Glycolysis</keyword>
<keyword id="KW-0413">Isomerase</keyword>
<keyword id="KW-0464">Manganese</keyword>
<keyword id="KW-0479">Metal-binding</keyword>
<keyword id="KW-1185">Reference proteome</keyword>
<protein>
    <recommendedName>
        <fullName evidence="1">2,3-bisphosphoglycerate-independent phosphoglycerate mutase</fullName>
        <shortName evidence="1">BPG-independent PGAM</shortName>
        <shortName evidence="1">Phosphoglyceromutase</shortName>
        <shortName evidence="1">iPGM</shortName>
        <ecNumber evidence="1">5.4.2.12</ecNumber>
    </recommendedName>
</protein>
<gene>
    <name evidence="1" type="primary">gpmI</name>
    <name type="synonym">pgm</name>
    <name type="ordered locus">rrnAC3403</name>
</gene>
<evidence type="ECO:0000255" key="1">
    <source>
        <dbReference type="HAMAP-Rule" id="MF_01038"/>
    </source>
</evidence>
<evidence type="ECO:0000256" key="2">
    <source>
        <dbReference type="SAM" id="MobiDB-lite"/>
    </source>
</evidence>
<proteinExistence type="inferred from homology"/>
<reference key="1">
    <citation type="journal article" date="2004" name="Genome Res.">
        <title>Genome sequence of Haloarcula marismortui: a halophilic archaeon from the Dead Sea.</title>
        <authorList>
            <person name="Baliga N.S."/>
            <person name="Bonneau R."/>
            <person name="Facciotti M.T."/>
            <person name="Pan M."/>
            <person name="Glusman G."/>
            <person name="Deutsch E.W."/>
            <person name="Shannon P."/>
            <person name="Chiu Y."/>
            <person name="Weng R.S."/>
            <person name="Gan R.R."/>
            <person name="Hung P."/>
            <person name="Date S.V."/>
            <person name="Marcotte E."/>
            <person name="Hood L."/>
            <person name="Ng W.V."/>
        </authorList>
    </citation>
    <scope>NUCLEOTIDE SEQUENCE [LARGE SCALE GENOMIC DNA]</scope>
    <source>
        <strain>ATCC 43049 / DSM 3752 / JCM 8966 / VKM B-1809</strain>
    </source>
</reference>